<sequence>MSKTSRELTNETELHLCSSTLDLISKSQLLAQCLGTPQNLVSLSKMVPSILESPTLEPRYTSTHSSSLQSLQLLALNTSSTLYKWTTGSISKLRGHLERELCRGLVPLNDFIPKGNYVELSLMIPSVLTGQGTSTTTTLQEMCSDMVQSCIKSMETDLLKGVLALKDQTSCQEYFLSANYQSLIPPQPLVNAMRMSSVVDLSPLILENTRLLLKLSPFHGGTSVSYTSMIREFVDCSRRDEKCLKRRLTKKQKRQEEGSFDANKVITLGGKMYRYRVVILKCSDEVDDLIGFDGKVGEFDYNFENVPHCWRDLVKRRCLIRAKATWNLAGGVDENLDHVYIDESQXDFRCADGSSDSPSACVEDPHLEERIFSRVWLKQTSRFFGTKIQQVSELFKSIGLPELETTYCGVNPVKVGNKWLSFRDQGRSRVFFVYTDSNVYLATTRQKVCCDYILTKFKSVKWIGNKPDQCRVVKVLAWLISVNKVKNCTRVITPMLTVQGKISHRRVDYLDISVLDSYVSDTAGLNCVQKVKKFLSMYYNCGADLGLLDNFLTPIECGTKQLVFERCNCPNHQFYVAQFDNHVVLGLGRPTGVVYPEEIPSCANIYAVGFATQKRVVEVHYYSEMDRHQLPQDYYYFAYDQEFQHVGGDDYVNHHLDDVEDQPFPPVLFDDVYDSGDSLDDGGSDLDCFDVGYDFFWPEAPIPVPSPYGYYQGQRLRDLCVAGGDFGCDCPRCDGTFIYHPFRPRHYHSFDEVGPFIQMCEFTLTYSGQNYNLFYGLEPKVCLQDLVEASDKLLQLLVRGQLENISLPNDILACLSSLKLGANIHPFLWPAPFFNANGEWVDIFGGGDFTVFGEDFCLKAKSMVESVYFLVENFFSVDCPIGNLYCNLHLDGDVKKMLWSTIHMKYIYLALIHSEKVFNIILNSRQLSHQELVKLVIIGTFDVSIVAPCACSGDCNHGKVYNWTNLLSSVYRFVTLDQLVGLSYCEKRSLVLRKVQQYLEVEEGYQRPVQLLMAPFYGFNDNAEPDEQPLTGVFHQQVMQMFDTCVMLDVICGLKRPRASVYNLFGVLADYFRRPFTFRYYQVAEFSGSESTQVFTDVTSALTSKDPCSNRPYIYHDYAVCRVVEPRTAAVTTRGAIYPPEVIEMIRSYLPIEFDVGVMNYVDGNCDFKYCNLEFCLSGRGLVKLDTGELLDYKTNLFVVRYKTLPLLYVTSNPIYLSDFSLDNAVCLTGDFKLSFDVEPGSTLFGLYFTNGRCYRDVWETLPRFGLGTLSPPKCHSKCEPFENLAEVFFFKRRVQLVPLVNNYTPVFRHRPDIPKVLTVELMPYYSSIGYQGFVAPKCVLPGCVATQYCKLRHQLDRCVQVTKLAVAYAFYFKPLNIGSLYHLDPMRGTSYGKPAVVQFEPVGLIKEVNILVYQFGKHVAIHYFPECPTYVAYGHYPSHSVGVWLGYLPSVEECVIAQRNYRVYVPTCFRLSRTGCYHIQQDEDFERTHITVSYHYARDFDTKSLTPMFQMFSKIFGKSKQDLICALNSLSEESQSVLTLFCEEFDSAYTLQTISDEVSFETSTSPELVACVLAYAIGYELCLTVKTDGECESLDVGSSLEQVYVDYDVSKNVWDLSTHLQDDSSDDLELPFNQYYEFKVGRASVVLVQDDFKSVYDFLKSEQGVDYVVNPANNQLKHGGGIAKVISCMCGPKLTSWSNNYIKQYKKLGVTCAIRSPGFQLGKGVQIIHVVGPKSADSDVVNKLEASWRSVFQNVKPDTTVLTSMLSTGIFGCSVTDSATTLLSNLVDLDKDVVVFVVTNVSDQYIEALGVVESFQSAHGLPNFGNTCWFNALYQLLKSFAVKEQIVQDLVNCFDDFYECPTRQCVEWVCDQLGVVFGEQYDAVEMLVKIFDVFKCNVRVGYDCLARLQQVALGSCREVPADAVLMFFGQDKSGHWVAARKVCGVWYTFDDKVVVKKDPDWSKVVLVLRERGLFKATDFETPRPRRRRVAYRVPRDTISQDAIMFLEERQFSSGTMLAHSCVESVESFHVEGVQPSPLQSVDGLDDVADLSCDNHVCDNSDLQEPQVVVSQPSEVLTTSMSIECPVLENSECSVETDLNPVCEENEQVGESGIKEQDGVTTSDSQQVFSKSLDPIIKQHEVESVEPQDLPVFSQQPQVMLSMTWRDVLFQQYLGFKSDLLSLTHVNKFKIVVYLMVLWFVLLYCFSDFSLLSRFCLYVFLLWLSHVVLVVKKLDLGLVNSGGESYVLRILSSVKVPNCIAFNCDGVHWLILKLLFYSFHFYDFFVKTLVVVFQMPQLRCFTWPLLKLGFADTFLSHHILAFPTKQVSQSCLPVFGDERKYIYVPYWCKESFRTLVARAKQLTATGRTKTLDNWHYQCCSKTVKPSSCFNVRDFVFDDACNNHKHYGFFSALWFYVVFYSGFVSFWLPLMFCYCALFMCTFKNLPVNITRPIRWTVLQQVVDDLLSIITKPLFGRPACPPLSAYLTATTADEAVRASRSLLGRFCTPVGFQQPIMNVENGVAVSSLGFINPLMWPLFIVVLLDNRFVWFFNVLSYIMLPVFVIILFYFYLRKICGCVNVKGVVKNCTRHFQNFSKPLVAAGVHGNRTNFTYQPMQENWCDRHSWYCPKEEHYMTPEMAMFIKNYYNLATSPMADTIWCDYVKSVPNMTWANFKFSLFKSNETVMCGPSSHADSMLLSWYAFLHGIRFAVNPSVIDIPSQTQPIYVSSDSDDSLDKGCDVSLRPTKNKGKFKKQSVAYFSAGPVDLWYYVMLIIALGAIFVFMYSCFMVGQYVVMPRDKFFGVNPTGYSYVNAQPYLHASPPVLRNSDGMVLATPLKVPSISYSVYRLLSGHLYFTKLIVAENECTPPFGAXRLSHEFTCNDFTYILPAHLRIFGRYIMLIHPDQLHMLPFEVEHSTHTRLCYVTGTNIVECLPTFEIISPYVFVVLVAIFTIVFLFLLRMYIVMYSYFKVFTYVVFKLLFVNTVMVLFVVCLPPLVPGVVFVLALWLCDSVVFLLYLAVLSLFILPWFYVMLFVLIVGGFVFWWMMKSSDVVHLTPDGLTFNGTFEQVSKCVFPLNPLIVNRLLLDCRMSHSDLVEKSKLKTTEGKLATEMMKVFMTGETAYYQPSNFSFQSVFSKVVSPFTLHARPPMPMFRLYVYFNGQCVGTTCTGTGFAIDDSTIVTAKHLFECDDLKPTHLSVELSCRSYWCTWKEPNVLSWKFEGENAYISVENLRDFYGIDFKYLPFQQIECEFYKRMEAVTIYSIKYGSEFATQAWQTVNGHFVCCNTEGGDSGAPLVWRDSVIGVHQGLCDSFKTTLASDSKGVMMTEVKGYHVDPPVYYKPIIMSAAYNKFVADSDVSVGECTNYHNFVNEDFFSMHDELEKVSFGDKMFRYCQSLPRYLEPLHYFHVPSFWQPFKKQSVSSNVSWVVENLHFIFSVYFLVCDFVAYWWLDDPFSVVLPLFFVVQLLSTVVLKNVLFWNTSYLVTLAVTFYVHSEVAESMYLLGLFSDQIVNRVGLILVVSVMCLFVVVRVVVNVKRAIFVVVVSVLLIVVNVVLGVVQFNSLVAVCMFDIYAVFAALLTPQPVVAIMMLILFDTKCLMSFAFVVIVLSFRVFKNYKFVRVLHNLCNFDFVLTQLSLFRYRHHNQGNNPSHYEALWLFLKELYYGVQDVKYEVFSPQAGTYNVRFLTDMTEQDQLEAVEQVQRRLQRFSIVQDKNSQRLVLYSKNVDFLRSQIQHQRVLGANPFIITTLTPKDIAIDNVEVHNPSQFKPEDLQAHMWFYSKSPIFVGQVPIPTNVQTAAVLDTTYNCQDLTADEKNNVAANLQIQNAALTLSLFEECNRFLESELGDVPTLMWQSEDVVDVKQLEVQIEKLRVVLDGMQLGTSEYKATRKQINILQSQLDKALAFERKLAKFLEKVDQQQAITNETAKQLSAFKNLVKQVYESYMSSLKVRVVESNDASCLLTSTDLPRKLVLMRPITGLDNIKIVEKANGCEITAFGDTFTTGLGSNLAGLAYSSTQPLSAYPFIFNLEGIFKQQANIGYKTVECNMSSDNGSVLYKGKIVAVPSEDNPDFVVCGKGYKLDCGINVLMIPSIVRYITLNLTDHLQRQSLKPRRRLQYKQQGVRLGGVNLGEHQAFSNELISSVGYTTWVSSTVCTDKSHKHPWFVQIPSSEKDPEWFMHNTQVKNNQWVVDAKPTHWLVDADTNEQLFALALTDEEYLKAESILAKWSPITQDVECWFKDLRGYYTVSGLQPLWPVCPKKICSLKIVPIFQSQSVAYADEPTHFLSLPVVNKNFLEAFYELQEGFPGEKQVAPHISLTMLKLTEEDVAKVEDILDEMVLPNTYATITNPHMMGQYYVFEVEGLQALHDEVVSVLRQHGIACDQTRMWKPHLTIGEIKDGSVFNKFKDFGITCKLEDCDFVKLGAPKANARYEFIATLPVGDFKLLRDVWCACRHLCFQNGAYQSSRSKHYIDLATEYNAGIVKVNKSNTHSVEYKGQRFMIKRVKDQHEFALARTAFLPSIIPHHMVHQNGEWFLVRGPTTQWSLGDLVYAIWLGDQAYLDECGFVFNPSRDEFLDDANQRSYLANLLEPAILSFCEIFHCVKGCQVPYKITLDNLDLKGQLYDFGDYPCPNKVDNQSALFVLAEVWSMTRKPFPTKFAQVLAKEMNVPADFQMYFQHTLLSGKYFDKAMCLNNVRPLLRDPANLTTTPFFSQHSGVWTHFYNPIYGLVECDLEEFSNLPEVLQQLITVQGPITSAMTPAISIGEGVYAANVPPVAAAKQKIPLYDVGLCQELTDAGVDCGEAFKYFYYLSNPAGALADVCFYDYQGTGFYSPKLLAGVYDFMKRVTTCYKTDERFTYEQAKPRKSSMGINITGYQQDAVYRALGPENITKLFEYAQKAPLPFCTKIITKFALSAKARARTVSSCSFIASTIFRFAHKPVTSKMVEVAQNSQGFCLIGVSKYGLKFSKFLKDKYGAIEQFDVFGSDYTKCDRTFPLSFRALTAALLYELGGWEEDSWLYLNEVNSYMLDTMLCDGMLLNKPGGTSSGDATTAHSNTFYNYMVHYVVAFKTILSDLSDCNKVMRIAAHNAYTTGDYGVFNTLLEEQFQTNYFLNFLSDDSFIFSKPGALKIFTCENFSNKLQTILHTKVDLTKSWATTGHIEEFCSAHIIKTDGEYHFLPSRGRLLASLLILDKLSDVDIYYMRFVAILCESAVYSRYQPEFFNGLFQVFLDKVQQFRKDYCCDPCPTQLLDRQFYENLVFTSNTEVGLVDCYLENFKLQCEFKQQAGFDRVCFCCPNPAVSVCEECYVPLPLCAYCYYVHVVISSHCKIEDKFKCPCGQDDIRELFIVLNNSICIYQCRSCVESDRLRISLLSDVDQVVRLPGFKANSASIAKNGVAQLLTPVDNVDVSLDWNHQETVQQNVARIVYHSANMTQMSIEVVYVNFSLVRNDGSSAILDIPNFKCPDTSYCLFYKPGKTGVLKFTGKGTLTSCYDSNNLTWFKVTCPDFNQPWRLATCFVIQQHDAVYPPIKSTQYENVTFVMGPPGTGKTTFVYNTYLSKASPSNRFVYCAPTHRLVGDMDEKVDGAVVVSAYNDRTYRNPVWKKDDSYDVLLCTHNTLPFIKSAVLIVDEVSLIPPHVMIKILSMGFKKVVLLGDPFQLSPVYKNHKVHFKYDTFYLLQLATQKRYLTACYRCPPQILSAFSKPYCDVGVDLVSFNNKPGKFDIIVSKQLANMQDFSVLSVLSKEYPGYVILVNYRAAVDYAMQNGLGDVTTIDSSQGTTAANHLLVLFGASNFSKTINRVIVGCSRSTTHLVVVCCPELYKHFQPILNWPEPVYRYFGMEKQSDFNIIPEVASLVFCDIEFWHYKADPNSKTRTVYPGQIAVVTSQTLQLYLGVFDDAGYKSALRGLPKDVFVPPNWVWMRKHYPSFEQHAYNMQRLFKFIIDTTCGQPWFILYSCSNDLKSLKFYVEFGTNYFCSCGELAICLMRDGLYKCRNCYGNMSISKLVNCKYLDVQKERIKLQDAHDAICQQFHGDSHEALCDAVMTKCLYLASYDAAFKDTIHVKYKDLCLEIQYKITSPYVRYDGVNKRYLYRDHGAMHYFKTPKSPMQNVYRYEVGAHTEYSINICNSYEGCQSFGKTCTKCIHIHCIVEQFMADDRYRDFILVSVVKSDFVEQALSPAAKALMLTVTRVEGKSFYTSNGQRYDLYDYDLSKSVMRVVGASVKPLPLYSVVVGLGINCTVGCVLPNVPMKLKDELLSTDVPLSTLRLDLPTWYYVTWPTLSNRTSRWKLAGAQVYDCSVHIYVEATGEQPLYYLQLGNGESLRELPETLFSTGRLYNLEHDPSKNFNVQQLAIETIPKNHHVFAGDFTDVGTDIGGVHHVVALNGYKGSIIPNYVKPIATGLINVGRSVKRTTLVDVCANQLYEKVKQQIAGVKVSKVIFVNIDFQEVQFMVFAKGEDDIQTFYPQKEFIRSYYEWPTILPELESHYDLKNYGQDPQFMPQPVNFAKYTQICTFIQEHVKVARNSLIWHVGAAGIDGCSPGDIVLSSFFKECLVYSWDVKDYDTLLEKHNYDCNFRPNLIVSDVYNVSSNVSEVLEDCVHRLALGGTIIFKTTESSRPDIQLSKVTKYFAAVHFFTAGVNTSSSEVFVVLKYKLHSEPIGEELCSPNILRRIAAYRNKLCIVPNFKVFSTSLSYRFSSVKFVQKCFYVSVPRQFCASGLIQEVPLLCQMKH</sequence>
<protein>
    <recommendedName>
        <fullName>Replicase polyprotein 1ab</fullName>
        <shortName>pp1ab</shortName>
    </recommendedName>
    <alternativeName>
        <fullName>ORF1ab polyprotein</fullName>
    </alternativeName>
    <component>
        <recommendedName>
            <fullName>Putative papain-like proteinase</fullName>
            <shortName evidence="2">PL-PRO</shortName>
            <ecNumber>3.4.22.-</ecNumber>
        </recommendedName>
        <alternativeName>
            <fullName>Non-structural protein 1</fullName>
            <shortName>nsp1</shortName>
        </alternativeName>
    </component>
    <component>
        <recommendedName>
            <fullName>Non-structural protein 2</fullName>
            <shortName>nsp2</shortName>
        </recommendedName>
    </component>
    <component>
        <recommendedName>
            <fullName>3C-like serine proteinase</fullName>
            <shortName>3CLSP</shortName>
            <ecNumber>3.4.21.-</ecNumber>
        </recommendedName>
        <alternativeName>
            <fullName>M-PRO</fullName>
        </alternativeName>
        <alternativeName>
            <fullName>nsp3</fullName>
        </alternativeName>
        <alternativeName>
            <fullName>p27</fullName>
        </alternativeName>
    </component>
    <component>
        <recommendedName>
            <fullName>Non-structural protein 4</fullName>
            <shortName>nsp4</shortName>
        </recommendedName>
    </component>
    <component>
        <recommendedName>
            <fullName>Non-structural protein 5</fullName>
            <shortName>nsp5</shortName>
        </recommendedName>
    </component>
    <component>
        <recommendedName>
            <fullName>Non-structural protein 6</fullName>
            <shortName>nsp6</shortName>
        </recommendedName>
    </component>
    <component>
        <recommendedName>
            <fullName>Non-structural protein 7</fullName>
            <shortName>nsp7</shortName>
        </recommendedName>
    </component>
    <component>
        <recommendedName>
            <fullName>Non-structural protein 8</fullName>
            <shortName>nsp8</shortName>
        </recommendedName>
    </component>
    <component>
        <recommendedName>
            <fullName>RNA-directed RNA polymerase</fullName>
            <shortName>Pol</shortName>
            <shortName>RdRp</shortName>
            <ecNumber>2.7.7.48</ecNumber>
        </recommendedName>
        <alternativeName>
            <fullName>nsp10</fullName>
        </alternativeName>
        <alternativeName>
            <fullName>p100</fullName>
        </alternativeName>
    </component>
    <component>
        <recommendedName>
            <fullName>Helicase</fullName>
            <shortName>Hel</shortName>
            <ecNumber>3.6.4.12</ecNumber>
            <ecNumber>3.6.4.13</ecNumber>
        </recommendedName>
        <alternativeName>
            <fullName>nsp11</fullName>
        </alternativeName>
        <alternativeName>
            <fullName>p67</fullName>
        </alternativeName>
    </component>
    <component>
        <recommendedName>
            <fullName>Exoribonuclease</fullName>
            <shortName>ExoN</shortName>
            <ecNumber evidence="3">3.1.13.-</ecNumber>
        </recommendedName>
        <alternativeName>
            <fullName>nsp12</fullName>
        </alternativeName>
    </component>
    <component>
        <recommendedName>
            <fullName>Non-structural protein 13</fullName>
            <shortName>nsp13</shortName>
        </recommendedName>
    </component>
    <component>
        <recommendedName>
            <fullName>Uridylate-specific endoribonuclease</fullName>
            <ecNumber>3.1.-.-</ecNumber>
        </recommendedName>
        <alternativeName>
            <fullName>NendoU</fullName>
        </alternativeName>
        <alternativeName>
            <fullName>nsp14</fullName>
        </alternativeName>
    </component>
    <component>
        <recommendedName>
            <fullName>Putative 2'-O-methyl transferase</fullName>
            <ecNumber>2.1.1.-</ecNumber>
        </recommendedName>
        <alternativeName>
            <fullName>nsp15</fullName>
        </alternativeName>
    </component>
</protein>
<organismHost>
    <name type="scientific">Bos taurus</name>
    <name type="common">Bovine</name>
    <dbReference type="NCBI Taxonomy" id="9913"/>
</organismHost>
<keyword id="KW-0067">ATP-binding</keyword>
<keyword id="KW-0255">Endonuclease</keyword>
<keyword id="KW-0269">Exonuclease</keyword>
<keyword id="KW-0347">Helicase</keyword>
<keyword id="KW-1043">Host membrane</keyword>
<keyword id="KW-0378">Hydrolase</keyword>
<keyword id="KW-0472">Membrane</keyword>
<keyword id="KW-0479">Metal-binding</keyword>
<keyword id="KW-0489">Methyltransferase</keyword>
<keyword id="KW-0540">Nuclease</keyword>
<keyword id="KW-0547">Nucleotide-binding</keyword>
<keyword id="KW-0548">Nucleotidyltransferase</keyword>
<keyword id="KW-0645">Protease</keyword>
<keyword id="KW-1185">Reference proteome</keyword>
<keyword id="KW-0677">Repeat</keyword>
<keyword id="KW-0688">Ribosomal frameshifting</keyword>
<keyword id="KW-0696">RNA-directed RNA polymerase</keyword>
<keyword id="KW-0720">Serine protease</keyword>
<keyword id="KW-0788">Thiol protease</keyword>
<keyword id="KW-0808">Transferase</keyword>
<keyword id="KW-0812">Transmembrane</keyword>
<keyword id="KW-1133">Transmembrane helix</keyword>
<keyword id="KW-0693">Viral RNA replication</keyword>
<keyword id="KW-0862">Zinc</keyword>
<keyword id="KW-0863">Zinc-finger</keyword>
<evidence type="ECO:0000250" key="1"/>
<evidence type="ECO:0000250" key="2">
    <source>
        <dbReference type="UniProtKB" id="P0C6V7"/>
    </source>
</evidence>
<evidence type="ECO:0000250" key="3">
    <source>
        <dbReference type="UniProtKB" id="Q008X6"/>
    </source>
</evidence>
<evidence type="ECO:0000255" key="4"/>
<evidence type="ECO:0000255" key="5">
    <source>
        <dbReference type="PROSITE-ProRule" id="PRU00490"/>
    </source>
</evidence>
<evidence type="ECO:0000255" key="6">
    <source>
        <dbReference type="PROSITE-ProRule" id="PRU00539"/>
    </source>
</evidence>
<evidence type="ECO:0000255" key="7">
    <source>
        <dbReference type="PROSITE-ProRule" id="PRU00986"/>
    </source>
</evidence>
<evidence type="ECO:0000255" key="8">
    <source>
        <dbReference type="PROSITE-ProRule" id="PRU01292"/>
    </source>
</evidence>
<evidence type="ECO:0000255" key="9">
    <source>
        <dbReference type="PROSITE-ProRule" id="PRU01298"/>
    </source>
</evidence>
<evidence type="ECO:0000255" key="10">
    <source>
        <dbReference type="PROSITE-ProRule" id="PRU01300"/>
    </source>
</evidence>
<evidence type="ECO:0000255" key="11">
    <source>
        <dbReference type="PROSITE-ProRule" id="PRU01303"/>
    </source>
</evidence>
<evidence type="ECO:0000305" key="12"/>
<name>R1AB_BRV1</name>
<dbReference type="EC" id="3.4.22.-"/>
<dbReference type="EC" id="3.4.21.-"/>
<dbReference type="EC" id="2.7.7.48"/>
<dbReference type="EC" id="3.6.4.12"/>
<dbReference type="EC" id="3.6.4.13"/>
<dbReference type="EC" id="3.1.13.-" evidence="3"/>
<dbReference type="EC" id="3.1.-.-"/>
<dbReference type="EC" id="2.1.1.-"/>
<dbReference type="EMBL" id="AY427798">
    <property type="protein sequence ID" value="AAS17963.1"/>
    <property type="molecule type" value="Genomic_RNA"/>
</dbReference>
<dbReference type="EMBL" id="U50390">
    <property type="protein sequence ID" value="AAD11480.1"/>
    <property type="molecule type" value="mRNA"/>
</dbReference>
<dbReference type="MEROPS" id="S65.001"/>
<dbReference type="Proteomes" id="UP000000355">
    <property type="component" value="Segment"/>
</dbReference>
<dbReference type="GO" id="GO:0033644">
    <property type="term" value="C:host cell membrane"/>
    <property type="evidence" value="ECO:0007669"/>
    <property type="project" value="UniProtKB-SubCell"/>
</dbReference>
<dbReference type="GO" id="GO:0016020">
    <property type="term" value="C:membrane"/>
    <property type="evidence" value="ECO:0007669"/>
    <property type="project" value="UniProtKB-KW"/>
</dbReference>
<dbReference type="GO" id="GO:0000175">
    <property type="term" value="F:3'-5'-RNA exonuclease activity"/>
    <property type="evidence" value="ECO:0007669"/>
    <property type="project" value="InterPro"/>
</dbReference>
<dbReference type="GO" id="GO:0043139">
    <property type="term" value="F:5'-3' DNA helicase activity"/>
    <property type="evidence" value="ECO:0007669"/>
    <property type="project" value="TreeGrafter"/>
</dbReference>
<dbReference type="GO" id="GO:0005524">
    <property type="term" value="F:ATP binding"/>
    <property type="evidence" value="ECO:0007669"/>
    <property type="project" value="UniProtKB-KW"/>
</dbReference>
<dbReference type="GO" id="GO:0016887">
    <property type="term" value="F:ATP hydrolysis activity"/>
    <property type="evidence" value="ECO:0007669"/>
    <property type="project" value="RHEA"/>
</dbReference>
<dbReference type="GO" id="GO:0008234">
    <property type="term" value="F:cysteine-type peptidase activity"/>
    <property type="evidence" value="ECO:0007669"/>
    <property type="project" value="UniProtKB-KW"/>
</dbReference>
<dbReference type="GO" id="GO:0004519">
    <property type="term" value="F:endonuclease activity"/>
    <property type="evidence" value="ECO:0007669"/>
    <property type="project" value="UniProtKB-KW"/>
</dbReference>
<dbReference type="GO" id="GO:0004483">
    <property type="term" value="F:mRNA (nucleoside-2'-O-)-methyltransferase activity"/>
    <property type="evidence" value="ECO:0007669"/>
    <property type="project" value="InterPro"/>
</dbReference>
<dbReference type="GO" id="GO:0003723">
    <property type="term" value="F:RNA binding"/>
    <property type="evidence" value="ECO:0007669"/>
    <property type="project" value="InterPro"/>
</dbReference>
<dbReference type="GO" id="GO:0003724">
    <property type="term" value="F:RNA helicase activity"/>
    <property type="evidence" value="ECO:0007669"/>
    <property type="project" value="UniProtKB-EC"/>
</dbReference>
<dbReference type="GO" id="GO:0003968">
    <property type="term" value="F:RNA-directed RNA polymerase activity"/>
    <property type="evidence" value="ECO:0007669"/>
    <property type="project" value="UniProtKB-KW"/>
</dbReference>
<dbReference type="GO" id="GO:0008236">
    <property type="term" value="F:serine-type peptidase activity"/>
    <property type="evidence" value="ECO:0007669"/>
    <property type="project" value="UniProtKB-KW"/>
</dbReference>
<dbReference type="GO" id="GO:0008270">
    <property type="term" value="F:zinc ion binding"/>
    <property type="evidence" value="ECO:0007669"/>
    <property type="project" value="UniProtKB-KW"/>
</dbReference>
<dbReference type="GO" id="GO:0006351">
    <property type="term" value="P:DNA-templated transcription"/>
    <property type="evidence" value="ECO:0007669"/>
    <property type="project" value="InterPro"/>
</dbReference>
<dbReference type="GO" id="GO:0032259">
    <property type="term" value="P:methylation"/>
    <property type="evidence" value="ECO:0007669"/>
    <property type="project" value="UniProtKB-KW"/>
</dbReference>
<dbReference type="GO" id="GO:0006508">
    <property type="term" value="P:proteolysis"/>
    <property type="evidence" value="ECO:0007669"/>
    <property type="project" value="UniProtKB-KW"/>
</dbReference>
<dbReference type="GO" id="GO:0039694">
    <property type="term" value="P:viral RNA genome replication"/>
    <property type="evidence" value="ECO:0007669"/>
    <property type="project" value="InterPro"/>
</dbReference>
<dbReference type="GO" id="GO:0075523">
    <property type="term" value="P:viral translational frameshifting"/>
    <property type="evidence" value="ECO:0007669"/>
    <property type="project" value="UniProtKB-KW"/>
</dbReference>
<dbReference type="CDD" id="cd20762">
    <property type="entry name" value="capping_2-OMTase_Nidovirales"/>
    <property type="match status" value="1"/>
</dbReference>
<dbReference type="CDD" id="cd21557">
    <property type="entry name" value="Macro_X_Nsp3-like"/>
    <property type="match status" value="1"/>
</dbReference>
<dbReference type="CDD" id="cd21162">
    <property type="entry name" value="NendoU_tv_PToV-like"/>
    <property type="match status" value="1"/>
</dbReference>
<dbReference type="CDD" id="cd23186">
    <property type="entry name" value="Tobaniviridae_RdRp"/>
    <property type="match status" value="1"/>
</dbReference>
<dbReference type="CDD" id="cd21413">
    <property type="entry name" value="unc_tv_SF1_Hel-like"/>
    <property type="match status" value="1"/>
</dbReference>
<dbReference type="CDD" id="cd21403">
    <property type="entry name" value="ZBD_tv_SF1_Hel-like"/>
    <property type="match status" value="1"/>
</dbReference>
<dbReference type="Gene3D" id="3.90.1140.10">
    <property type="entry name" value="Cyclic phosphodiesterase"/>
    <property type="match status" value="1"/>
</dbReference>
<dbReference type="Gene3D" id="3.40.220.10">
    <property type="entry name" value="Leucine Aminopeptidase, subunit E, domain 1"/>
    <property type="match status" value="1"/>
</dbReference>
<dbReference type="Gene3D" id="3.40.50.300">
    <property type="entry name" value="P-loop containing nucleotide triphosphate hydrolases"/>
    <property type="match status" value="2"/>
</dbReference>
<dbReference type="Gene3D" id="3.40.50.150">
    <property type="entry name" value="Vaccinia Virus protein VP39"/>
    <property type="match status" value="1"/>
</dbReference>
<dbReference type="InterPro" id="IPR027351">
    <property type="entry name" value="(+)RNA_virus_helicase_core_dom"/>
</dbReference>
<dbReference type="InterPro" id="IPR050534">
    <property type="entry name" value="Coronavir_polyprotein_1ab"/>
</dbReference>
<dbReference type="InterPro" id="IPR009097">
    <property type="entry name" value="Cyclic_Pdiesterase"/>
</dbReference>
<dbReference type="InterPro" id="IPR043502">
    <property type="entry name" value="DNA/RNA_pol_sf"/>
</dbReference>
<dbReference type="InterPro" id="IPR037227">
    <property type="entry name" value="EndoU-like"/>
</dbReference>
<dbReference type="InterPro" id="IPR002589">
    <property type="entry name" value="Macro_dom"/>
</dbReference>
<dbReference type="InterPro" id="IPR043472">
    <property type="entry name" value="Macro_dom-like"/>
</dbReference>
<dbReference type="InterPro" id="IPR044371">
    <property type="entry name" value="Macro_X_NSP3-like"/>
</dbReference>
<dbReference type="InterPro" id="IPR043609">
    <property type="entry name" value="NendoU_nidovirus"/>
</dbReference>
<dbReference type="InterPro" id="IPR044397">
    <property type="entry name" value="NendoU_PToV-like"/>
</dbReference>
<dbReference type="InterPro" id="IPR044863">
    <property type="entry name" value="NIRAN"/>
</dbReference>
<dbReference type="InterPro" id="IPR046438">
    <property type="entry name" value="NIV_2_O_MTASE"/>
</dbReference>
<dbReference type="InterPro" id="IPR046436">
    <property type="entry name" value="NIV_EXON"/>
</dbReference>
<dbReference type="InterPro" id="IPR039573">
    <property type="entry name" value="NS2A-like"/>
</dbReference>
<dbReference type="InterPro" id="IPR027352">
    <property type="entry name" value="NSP13_ZBD_CoV-like"/>
</dbReference>
<dbReference type="InterPro" id="IPR009461">
    <property type="entry name" value="NSP16_CoV-like"/>
</dbReference>
<dbReference type="InterPro" id="IPR027417">
    <property type="entry name" value="P-loop_NTPase"/>
</dbReference>
<dbReference type="InterPro" id="IPR038765">
    <property type="entry name" value="Papain-like_cys_pep_sf"/>
</dbReference>
<dbReference type="InterPro" id="IPR009003">
    <property type="entry name" value="Peptidase_S1_PA"/>
</dbReference>
<dbReference type="InterPro" id="IPR001205">
    <property type="entry name" value="RNA-dir_pol_C"/>
</dbReference>
<dbReference type="InterPro" id="IPR007094">
    <property type="entry name" value="RNA-dir_pol_PSvirus"/>
</dbReference>
<dbReference type="InterPro" id="IPR029063">
    <property type="entry name" value="SAM-dependent_MTases_sf"/>
</dbReference>
<dbReference type="InterPro" id="IPR044355">
    <property type="entry name" value="SF1_Hel_unc_tv"/>
</dbReference>
<dbReference type="InterPro" id="IPR044336">
    <property type="entry name" value="SF1_Hel_ZBD_tv"/>
</dbReference>
<dbReference type="PANTHER" id="PTHR43788">
    <property type="entry name" value="DNA2/NAM7 HELICASE FAMILY MEMBER"/>
    <property type="match status" value="1"/>
</dbReference>
<dbReference type="PANTHER" id="PTHR43788:SF16">
    <property type="entry name" value="HELICASE WITH ZINC FINGER 2"/>
    <property type="match status" value="1"/>
</dbReference>
<dbReference type="Pfam" id="PF13245">
    <property type="entry name" value="AAA_19"/>
    <property type="match status" value="1"/>
</dbReference>
<dbReference type="Pfam" id="PF05213">
    <property type="entry name" value="Corona_NS2A"/>
    <property type="match status" value="1"/>
</dbReference>
<dbReference type="Pfam" id="PF19215">
    <property type="entry name" value="CoV_NSP15_C"/>
    <property type="match status" value="1"/>
</dbReference>
<dbReference type="Pfam" id="PF01661">
    <property type="entry name" value="Macro"/>
    <property type="match status" value="1"/>
</dbReference>
<dbReference type="Pfam" id="PF00680">
    <property type="entry name" value="RdRP_1"/>
    <property type="match status" value="1"/>
</dbReference>
<dbReference type="SMART" id="SM00506">
    <property type="entry name" value="A1pp"/>
    <property type="match status" value="1"/>
</dbReference>
<dbReference type="SUPFAM" id="SSF54001">
    <property type="entry name" value="Cysteine proteinases"/>
    <property type="match status" value="1"/>
</dbReference>
<dbReference type="SUPFAM" id="SSF56672">
    <property type="entry name" value="DNA/RNA polymerases"/>
    <property type="match status" value="1"/>
</dbReference>
<dbReference type="SUPFAM" id="SSF142877">
    <property type="entry name" value="EndoU-like"/>
    <property type="match status" value="1"/>
</dbReference>
<dbReference type="SUPFAM" id="SSF55144">
    <property type="entry name" value="LigT-like"/>
    <property type="match status" value="1"/>
</dbReference>
<dbReference type="SUPFAM" id="SSF52949">
    <property type="entry name" value="Macro domain-like"/>
    <property type="match status" value="1"/>
</dbReference>
<dbReference type="SUPFAM" id="SSF52540">
    <property type="entry name" value="P-loop containing nucleoside triphosphate hydrolases"/>
    <property type="match status" value="1"/>
</dbReference>
<dbReference type="SUPFAM" id="SSF50494">
    <property type="entry name" value="Trypsin-like serine proteases"/>
    <property type="match status" value="1"/>
</dbReference>
<dbReference type="PROSITE" id="PS51653">
    <property type="entry name" value="CV_ZBD"/>
    <property type="match status" value="1"/>
</dbReference>
<dbReference type="PROSITE" id="PS51154">
    <property type="entry name" value="MACRO"/>
    <property type="match status" value="1"/>
</dbReference>
<dbReference type="PROSITE" id="PS51958">
    <property type="entry name" value="NENDOU"/>
    <property type="match status" value="1"/>
</dbReference>
<dbReference type="PROSITE" id="PS51947">
    <property type="entry name" value="NIRAN"/>
    <property type="match status" value="1"/>
</dbReference>
<dbReference type="PROSITE" id="PS51955">
    <property type="entry name" value="NIV_2_O_MTASE"/>
    <property type="match status" value="1"/>
</dbReference>
<dbReference type="PROSITE" id="PS51953">
    <property type="entry name" value="NIV_EXON"/>
    <property type="match status" value="1"/>
</dbReference>
<dbReference type="PROSITE" id="PS51657">
    <property type="entry name" value="PSRV_HELICASE"/>
    <property type="match status" value="1"/>
</dbReference>
<dbReference type="PROSITE" id="PS50507">
    <property type="entry name" value="RDRP_SSRNA_POS"/>
    <property type="match status" value="1"/>
</dbReference>
<organism>
    <name type="scientific">Breda virus 1</name>
    <name type="common">BRV-1</name>
    <dbReference type="NCBI Taxonomy" id="360393"/>
    <lineage>
        <taxon>Viruses</taxon>
        <taxon>Riboviria</taxon>
        <taxon>Orthornavirae</taxon>
        <taxon>Pisuviricota</taxon>
        <taxon>Pisoniviricetes</taxon>
        <taxon>Nidovirales</taxon>
        <taxon>Tornidovirineae</taxon>
        <taxon>Tobaniviridae</taxon>
        <taxon>Torovirinae</taxon>
        <taxon>Torovirus</taxon>
        <taxon>Renitovirus</taxon>
        <taxon>Bovine torovirus</taxon>
    </lineage>
</organism>
<accession>P0C6V8</accession>
<accession>Q3T8J1</accession>
<accession>Q3T8J2</accession>
<accession>Q9YP98</accession>
<reference key="1">
    <citation type="journal article" date="2006" name="Virus Res.">
        <title>The complete sequence of the bovine torovirus genome.</title>
        <authorList>
            <person name="Draker R."/>
            <person name="Roper R.L."/>
            <person name="Petric M."/>
            <person name="Tellier R."/>
        </authorList>
    </citation>
    <scope>NUCLEOTIDE SEQUENCE [GENOMIC RNA]</scope>
</reference>
<reference key="2">
    <citation type="submission" date="1996-03" db="EMBL/GenBank/DDBJ databases">
        <authorList>
            <person name="Gu M."/>
            <person name="Petric M."/>
        </authorList>
    </citation>
    <scope>NUCLEOTIDE SEQUENCE [MRNA] OF 6380-6639</scope>
    <source>
        <strain>GC32</strain>
    </source>
</reference>
<feature type="chain" id="PRO_0000283859" description="Putative papain-like proteinase" evidence="4">
    <location>
        <begin position="1"/>
        <end position="2753"/>
    </location>
</feature>
<feature type="chain" id="PRO_0000283860" description="Non-structural protein 2" evidence="4">
    <location>
        <begin position="2754"/>
        <end position="3131"/>
    </location>
</feature>
<feature type="chain" id="PRO_0000283862" description="3C-like serine proteinase" evidence="1">
    <location>
        <begin position="3132"/>
        <end position="3418"/>
    </location>
</feature>
<feature type="chain" id="PRO_0000283863" description="Non-structural protein 4" evidence="4">
    <location>
        <begin position="3419"/>
        <end position="3677"/>
    </location>
</feature>
<feature type="chain" id="PRO_0000283864" description="Non-structural protein 5" evidence="4">
    <location>
        <begin position="3678"/>
        <end position="3854"/>
    </location>
</feature>
<feature type="chain" id="PRO_0000283865" description="Non-structural protein 6" evidence="4">
    <location>
        <begin position="3855"/>
        <end position="4036"/>
    </location>
</feature>
<feature type="chain" id="PRO_0000283866" description="Non-structural protein 7" evidence="4">
    <location>
        <begin position="4037"/>
        <end position="4121"/>
    </location>
</feature>
<feature type="chain" id="PRO_0000283867" description="Non-structural protein 8" evidence="4">
    <location>
        <begin position="4122"/>
        <end position="4274"/>
    </location>
</feature>
<feature type="chain" id="PRO_0000283868" description="RNA-directed RNA polymerase" evidence="4">
    <location>
        <begin position="4275"/>
        <end position="5286"/>
    </location>
</feature>
<feature type="chain" id="PRO_0000283869" description="Helicase" evidence="4">
    <location>
        <begin position="5287"/>
        <end position="5844"/>
    </location>
</feature>
<feature type="chain" id="PRO_0000283870" description="Exoribonuclease" evidence="4">
    <location>
        <begin position="5845"/>
        <end position="6174"/>
    </location>
</feature>
<feature type="chain" id="PRO_0000283871" description="Non-structural protein 13" evidence="4">
    <location>
        <begin position="6175"/>
        <end position="6318"/>
    </location>
</feature>
<feature type="chain" id="PRO_0000283872" description="Uridylate-specific endoribonuclease" evidence="4">
    <location>
        <begin position="6319"/>
        <end position="6468"/>
    </location>
</feature>
<feature type="chain" id="PRO_0000283873" description="Putative 2'-O-methyl transferase" evidence="4">
    <location>
        <begin position="6469"/>
        <end position="6733"/>
    </location>
</feature>
<feature type="transmembrane region" description="Helical" evidence="4">
    <location>
        <begin position="2191"/>
        <end position="2211"/>
    </location>
</feature>
<feature type="transmembrane region" description="Helical" evidence="4">
    <location>
        <begin position="2219"/>
        <end position="2239"/>
    </location>
</feature>
<feature type="transmembrane region" description="Helical" evidence="4">
    <location>
        <begin position="2266"/>
        <end position="2286"/>
    </location>
</feature>
<feature type="transmembrane region" description="Helical" evidence="4">
    <location>
        <begin position="2411"/>
        <end position="2431"/>
    </location>
</feature>
<feature type="transmembrane region" description="Helical" evidence="4">
    <location>
        <begin position="2521"/>
        <end position="2541"/>
    </location>
</feature>
<feature type="transmembrane region" description="Helical" evidence="4">
    <location>
        <begin position="2546"/>
        <end position="2566"/>
    </location>
</feature>
<feature type="transmembrane region" description="Helical" evidence="4">
    <location>
        <begin position="2769"/>
        <end position="2789"/>
    </location>
</feature>
<feature type="transmembrane region" description="Helical" evidence="4">
    <location>
        <begin position="2937"/>
        <end position="2957"/>
    </location>
</feature>
<feature type="transmembrane region" description="Helical" evidence="4">
    <location>
        <begin position="2986"/>
        <end position="3006"/>
    </location>
</feature>
<feature type="transmembrane region" description="Helical" evidence="4">
    <location>
        <begin position="3022"/>
        <end position="3042"/>
    </location>
</feature>
<feature type="transmembrane region" description="Helical" evidence="4">
    <location>
        <begin position="3422"/>
        <end position="3442"/>
    </location>
</feature>
<feature type="transmembrane region" description="Helical" evidence="4">
    <location>
        <begin position="3456"/>
        <end position="3478"/>
    </location>
</feature>
<feature type="transmembrane region" description="Helical" evidence="4">
    <location>
        <begin position="3486"/>
        <end position="3506"/>
    </location>
</feature>
<feature type="transmembrane region" description="Helical" evidence="4">
    <location>
        <begin position="3514"/>
        <end position="3534"/>
    </location>
</feature>
<feature type="transmembrane region" description="Helical" evidence="4">
    <location>
        <begin position="3538"/>
        <end position="3558"/>
    </location>
</feature>
<feature type="transmembrane region" description="Helical" evidence="4">
    <location>
        <begin position="3573"/>
        <end position="3593"/>
    </location>
</feature>
<feature type="transmembrane region" description="Helical" evidence="4">
    <location>
        <begin position="3598"/>
        <end position="3613"/>
    </location>
</feature>
<feature type="domain" description="Macro" evidence="5">
    <location>
        <begin position="1633"/>
        <end position="1814"/>
    </location>
</feature>
<feature type="domain" description="NiRAN" evidence="8">
    <location>
        <begin position="4442"/>
        <end position="4673"/>
    </location>
</feature>
<feature type="domain" description="RdRp catalytic" evidence="6">
    <location>
        <begin position="4981"/>
        <end position="5132"/>
    </location>
</feature>
<feature type="domain" description="CV ZBD" evidence="7">
    <location>
        <begin position="5289"/>
        <end position="5404"/>
    </location>
</feature>
<feature type="domain" description="(+)RNA virus helicase ATP-binding">
    <location>
        <begin position="5509"/>
        <end position="5688"/>
    </location>
</feature>
<feature type="domain" description="(+)RNA virus helicase C-terminal">
    <location>
        <begin position="5689"/>
        <end position="5848"/>
    </location>
</feature>
<feature type="domain" description="ExoN" evidence="9">
    <location>
        <begin position="5846"/>
        <end position="6059"/>
    </location>
</feature>
<feature type="domain" description="NendoU" evidence="11">
    <location>
        <begin position="6327"/>
        <end position="6467"/>
    </location>
</feature>
<feature type="domain" description="Nidovirus-type SAM-dependent 2'-O-MTase" evidence="10">
    <location>
        <begin position="6469"/>
        <end position="6733"/>
    </location>
</feature>
<feature type="region of interest" description="HD1" evidence="1">
    <location>
        <begin position="2183"/>
        <end position="2565"/>
    </location>
</feature>
<feature type="region of interest" description="HD2" evidence="1">
    <location>
        <begin position="2769"/>
        <end position="3042"/>
    </location>
</feature>
<feature type="region of interest" description="HD3" evidence="1">
    <location>
        <begin position="3430"/>
        <end position="3613"/>
    </location>
</feature>
<feature type="active site" description="Charge relay system; for 3C-like serine proteinase activity" evidence="2">
    <location>
        <position position="3184"/>
    </location>
</feature>
<feature type="active site" description="Charge relay system; for 3C-like serine proteinase activity" evidence="2">
    <location>
        <position position="3222"/>
    </location>
</feature>
<feature type="active site" description="Charge relay system; for 3C-like serine proteinase activity" evidence="2">
    <location>
        <position position="3291"/>
    </location>
</feature>
<feature type="active site" evidence="9">
    <location>
        <position position="5860"/>
    </location>
</feature>
<feature type="active site" evidence="9">
    <location>
        <position position="5862"/>
    </location>
</feature>
<feature type="active site" evidence="9">
    <location>
        <position position="5961"/>
    </location>
</feature>
<feature type="active site" evidence="9">
    <location>
        <position position="6037"/>
    </location>
</feature>
<feature type="active site" evidence="9">
    <location>
        <position position="6042"/>
    </location>
</feature>
<feature type="active site" evidence="11">
    <location>
        <position position="6363"/>
    </location>
</feature>
<feature type="active site" evidence="11">
    <location>
        <position position="6380"/>
    </location>
</feature>
<feature type="active site" evidence="11">
    <location>
        <position position="6412"/>
    </location>
</feature>
<feature type="active site" evidence="10">
    <location>
        <position position="6509"/>
    </location>
</feature>
<feature type="active site" evidence="10">
    <location>
        <position position="6585"/>
    </location>
</feature>
<feature type="active site" evidence="10">
    <location>
        <position position="6613"/>
    </location>
</feature>
<feature type="active site" evidence="10">
    <location>
        <position position="6647"/>
    </location>
</feature>
<feature type="binding site" evidence="7">
    <location>
        <position position="5293"/>
    </location>
    <ligand>
        <name>Zn(2+)</name>
        <dbReference type="ChEBI" id="CHEBI:29105"/>
        <label>1</label>
    </ligand>
</feature>
<feature type="binding site" evidence="7">
    <location>
        <position position="5296"/>
    </location>
    <ligand>
        <name>Zn(2+)</name>
        <dbReference type="ChEBI" id="CHEBI:29105"/>
        <label>1</label>
    </ligand>
</feature>
<feature type="binding site" evidence="7">
    <location>
        <position position="5304"/>
    </location>
    <ligand>
        <name>Zn(2+)</name>
        <dbReference type="ChEBI" id="CHEBI:29105"/>
        <label>2</label>
    </ligand>
</feature>
<feature type="binding site" evidence="7">
    <location>
        <position position="5307"/>
    </location>
    <ligand>
        <name>Zn(2+)</name>
        <dbReference type="ChEBI" id="CHEBI:29105"/>
        <label>2</label>
    </ligand>
</feature>
<feature type="binding site" evidence="7">
    <location>
        <position position="5314"/>
    </location>
    <ligand>
        <name>Zn(2+)</name>
        <dbReference type="ChEBI" id="CHEBI:29105"/>
        <label>1</label>
    </ligand>
</feature>
<feature type="binding site" evidence="7">
    <location>
        <position position="5317"/>
    </location>
    <ligand>
        <name>Zn(2+)</name>
        <dbReference type="ChEBI" id="CHEBI:29105"/>
        <label>1</label>
    </ligand>
</feature>
<feature type="binding site" evidence="7">
    <location>
        <position position="5321"/>
    </location>
    <ligand>
        <name>Zn(2+)</name>
        <dbReference type="ChEBI" id="CHEBI:29105"/>
        <label>2</label>
    </ligand>
</feature>
<feature type="binding site" evidence="7">
    <location>
        <position position="5327"/>
    </location>
    <ligand>
        <name>Zn(2+)</name>
        <dbReference type="ChEBI" id="CHEBI:29105"/>
        <label>2</label>
    </ligand>
</feature>
<feature type="binding site" evidence="7">
    <location>
        <position position="5336"/>
    </location>
    <ligand>
        <name>Zn(2+)</name>
        <dbReference type="ChEBI" id="CHEBI:29105"/>
        <label>3</label>
    </ligand>
</feature>
<feature type="binding site" evidence="7">
    <location>
        <position position="5338"/>
    </location>
    <ligand>
        <name>Zn(2+)</name>
        <dbReference type="ChEBI" id="CHEBI:29105"/>
        <label>3</label>
    </ligand>
</feature>
<feature type="binding site" evidence="7">
    <location>
        <position position="5359"/>
    </location>
    <ligand>
        <name>Zn(2+)</name>
        <dbReference type="ChEBI" id="CHEBI:29105"/>
        <label>3</label>
    </ligand>
</feature>
<feature type="binding site" evidence="7">
    <location>
        <position position="5362"/>
    </location>
    <ligand>
        <name>Zn(2+)</name>
        <dbReference type="ChEBI" id="CHEBI:29105"/>
        <label>3</label>
    </ligand>
</feature>
<feature type="binding site" evidence="9">
    <location>
        <position position="6025"/>
    </location>
    <ligand>
        <name>Zn(2+)</name>
        <dbReference type="ChEBI" id="CHEBI:29105"/>
        <label>4</label>
    </ligand>
</feature>
<feature type="binding site" evidence="9">
    <location>
        <position position="6029"/>
    </location>
    <ligand>
        <name>Zn(2+)</name>
        <dbReference type="ChEBI" id="CHEBI:29105"/>
        <label>4</label>
    </ligand>
</feature>
<feature type="binding site" evidence="9">
    <location>
        <position position="6033"/>
    </location>
    <ligand>
        <name>Zn(2+)</name>
        <dbReference type="ChEBI" id="CHEBI:29105"/>
        <label>4</label>
    </ligand>
</feature>
<feature type="binding site" evidence="9">
    <location>
        <position position="6048"/>
    </location>
    <ligand>
        <name>Zn(2+)</name>
        <dbReference type="ChEBI" id="CHEBI:29105"/>
        <label>4</label>
    </ligand>
</feature>
<feature type="site" description="Cleavage; by 3C-like serine proteinase" evidence="2">
    <location>
        <begin position="2753"/>
        <end position="2754"/>
    </location>
</feature>
<feature type="site" description="Cleavage; by 3C-like serine proteinase" evidence="2">
    <location>
        <begin position="3131"/>
        <end position="3132"/>
    </location>
</feature>
<feature type="site" description="Cleavage; by 3C-like serine proteinase" evidence="2">
    <location>
        <begin position="3418"/>
        <end position="3419"/>
    </location>
</feature>
<feature type="site" description="Cleavage; by 3C-like serine proteinase" evidence="2">
    <location>
        <begin position="3677"/>
        <end position="3678"/>
    </location>
</feature>
<feature type="site" description="Cleavage; by 3C-like serine proteinase" evidence="2">
    <location>
        <begin position="3854"/>
        <end position="3855"/>
    </location>
</feature>
<feature type="site" description="Cleavage; by 3C-like serine proteinase" evidence="2">
    <location>
        <begin position="4036"/>
        <end position="4037"/>
    </location>
</feature>
<feature type="site" description="Cleavage; by 3C-like serine proteinase" evidence="2">
    <location>
        <begin position="4121"/>
        <end position="4122"/>
    </location>
</feature>
<feature type="site" description="Cleavage; by 3C-like serine proteinase" evidence="2">
    <location>
        <begin position="4274"/>
        <end position="4275"/>
    </location>
</feature>
<feature type="site" description="Cleavage; by 3C-like serine proteinase" evidence="2">
    <location>
        <begin position="5286"/>
        <end position="5287"/>
    </location>
</feature>
<feature type="site" description="Cleavage; by 3C-like serine proteinase" evidence="2">
    <location>
        <begin position="5844"/>
        <end position="5845"/>
    </location>
</feature>
<feature type="site" description="Cleavage; by 3C-like serine proteinase" evidence="2">
    <location>
        <begin position="6174"/>
        <end position="6175"/>
    </location>
</feature>
<feature type="site" description="Cleavage; by 3C-like serine proteinase" evidence="2">
    <location>
        <begin position="6318"/>
        <end position="6319"/>
    </location>
</feature>
<feature type="site" description="Cleavage; by 3C-like serine proteinase" evidence="2">
    <location>
        <begin position="6468"/>
        <end position="6469"/>
    </location>
</feature>
<comment type="function">
    <molecule>3C-like serine proteinase</molecule>
    <text evidence="2">The 3C-like serine proteinase is responsible for the majority of cleavages.</text>
</comment>
<comment type="function">
    <molecule>Helicase</molecule>
    <text evidence="1">The helicase which contains a zinc finger structure displays RNA and DNA duplex-unwinding activities with 5' to 3' polarity.</text>
</comment>
<comment type="function">
    <molecule>Exoribonuclease</molecule>
    <text evidence="1">Acts on both ssRNA and dsRNA in a 3' to 5' direction.</text>
</comment>
<comment type="function">
    <molecule>Uridylate-specific endoribonuclease</molecule>
    <text evidence="1">NendoU is a Mn(2+)-dependent, uridylate-specific enzyme, which leaves 2'-3'-cyclic phosphates 5' to the cleaved bond.</text>
</comment>
<comment type="catalytic activity">
    <molecule>RNA-directed RNA polymerase</molecule>
    <reaction evidence="6">
        <text>RNA(n) + a ribonucleoside 5'-triphosphate = RNA(n+1) + diphosphate</text>
        <dbReference type="Rhea" id="RHEA:21248"/>
        <dbReference type="Rhea" id="RHEA-COMP:14527"/>
        <dbReference type="Rhea" id="RHEA-COMP:17342"/>
        <dbReference type="ChEBI" id="CHEBI:33019"/>
        <dbReference type="ChEBI" id="CHEBI:61557"/>
        <dbReference type="ChEBI" id="CHEBI:140395"/>
        <dbReference type="EC" id="2.7.7.48"/>
    </reaction>
</comment>
<comment type="catalytic activity">
    <molecule>Helicase</molecule>
    <reaction>
        <text>ATP + H2O = ADP + phosphate + H(+)</text>
        <dbReference type="Rhea" id="RHEA:13065"/>
        <dbReference type="ChEBI" id="CHEBI:15377"/>
        <dbReference type="ChEBI" id="CHEBI:15378"/>
        <dbReference type="ChEBI" id="CHEBI:30616"/>
        <dbReference type="ChEBI" id="CHEBI:43474"/>
        <dbReference type="ChEBI" id="CHEBI:456216"/>
        <dbReference type="EC" id="3.6.4.12"/>
    </reaction>
</comment>
<comment type="catalytic activity">
    <molecule>Helicase</molecule>
    <reaction>
        <text>ATP + H2O = ADP + phosphate + H(+)</text>
        <dbReference type="Rhea" id="RHEA:13065"/>
        <dbReference type="ChEBI" id="CHEBI:15377"/>
        <dbReference type="ChEBI" id="CHEBI:15378"/>
        <dbReference type="ChEBI" id="CHEBI:30616"/>
        <dbReference type="ChEBI" id="CHEBI:43474"/>
        <dbReference type="ChEBI" id="CHEBI:456216"/>
        <dbReference type="EC" id="3.6.4.13"/>
    </reaction>
</comment>
<comment type="subcellular location">
    <molecule>Putative papain-like proteinase</molecule>
    <subcellularLocation>
        <location evidence="12">Host membrane</location>
        <topology evidence="12">Multi-pass membrane protein</topology>
    </subcellularLocation>
</comment>
<comment type="subcellular location">
    <molecule>Non-structural protein 2</molecule>
    <subcellularLocation>
        <location evidence="12">Host membrane</location>
        <topology evidence="12">Multi-pass membrane protein</topology>
    </subcellularLocation>
</comment>
<comment type="subcellular location">
    <molecule>Non-structural protein 4</molecule>
    <subcellularLocation>
        <location evidence="12">Host membrane</location>
        <topology evidence="12">Multi-pass membrane protein</topology>
    </subcellularLocation>
</comment>
<comment type="alternative products">
    <event type="ribosomal frameshifting"/>
    <isoform>
        <id>P0C6V8-1</id>
        <name>Replicase polyprotein 1ab</name>
        <name>pp1ab</name>
        <sequence type="displayed"/>
    </isoform>
    <isoform>
        <id>P0C6F4-1</id>
        <name>Replicase polyprotein 1a</name>
        <name>pp1a</name>
        <name>ORF1a polyprotein</name>
        <sequence type="external"/>
    </isoform>
</comment>
<comment type="domain">
    <text evidence="1">The hydrophobic domains (HD) could mediate the membrane association of the replication complex and thereby alter the architecture of the host cell membrane.</text>
</comment>
<comment type="PTM">
    <molecule>Isoform Replicase polyprotein 1ab</molecule>
    <text evidence="2">Specific enzymatic cleavages in vivo by its own protease yield mature proteins. 3CL-PRO is autocatalytically processed.</text>
</comment>
<comment type="miscellaneous">
    <molecule>Isoform Replicase polyprotein 1ab</molecule>
    <text>Produced by -1 ribosomal frameshifting at the 1a-1b genes boundary.</text>
</comment>
<proteinExistence type="evidence at transcript level"/>
<gene>
    <name type="primary">rep</name>
    <name type="ORF">1a-1b</name>
</gene>